<sequence>MRDYSKEIKSWAAELGFDFCGISAADFLEEEAPRLERWLNRNYHGKMAYMANHFDKRLDPRKLVDGAKSVVSLLLNYYPEEPLDASPYKISKYAYGKDYHYVIKDKLKLLFERIQKEIGEVGGRIFVDSAPVMDKIWAKKAGLGWVGKNSNLINRKMGSFFFIAELILDLPLQADGPIRDYCGTCTACIDACPTDAITPYEVDGSKCISYLTIELKDQIPNEFKGKMENWIFGCDICQDVCPWNSFARPHSTEEFYPNENLKTFQDWDEITSEIFSHLFKKSAVERTKLEGLKRNIAFVKEV</sequence>
<evidence type="ECO:0000255" key="1">
    <source>
        <dbReference type="HAMAP-Rule" id="MF_00916"/>
    </source>
</evidence>
<dbReference type="EC" id="1.17.99.6" evidence="1"/>
<dbReference type="EMBL" id="CP002305">
    <property type="protein sequence ID" value="ADQ16982.1"/>
    <property type="molecule type" value="Genomic_DNA"/>
</dbReference>
<dbReference type="RefSeq" id="WP_013408032.1">
    <property type="nucleotide sequence ID" value="NC_014655.1"/>
</dbReference>
<dbReference type="SMR" id="E4RUV9"/>
<dbReference type="STRING" id="649349.Lbys_1262"/>
<dbReference type="KEGG" id="lby:Lbys_1262"/>
<dbReference type="eggNOG" id="COG1600">
    <property type="taxonomic scope" value="Bacteria"/>
</dbReference>
<dbReference type="HOGENOM" id="CLU_030790_0_0_10"/>
<dbReference type="OrthoDB" id="9784571at2"/>
<dbReference type="UniPathway" id="UPA00392"/>
<dbReference type="Proteomes" id="UP000007435">
    <property type="component" value="Chromosome"/>
</dbReference>
<dbReference type="GO" id="GO:0005737">
    <property type="term" value="C:cytoplasm"/>
    <property type="evidence" value="ECO:0007669"/>
    <property type="project" value="UniProtKB-SubCell"/>
</dbReference>
<dbReference type="GO" id="GO:0051539">
    <property type="term" value="F:4 iron, 4 sulfur cluster binding"/>
    <property type="evidence" value="ECO:0007669"/>
    <property type="project" value="UniProtKB-KW"/>
</dbReference>
<dbReference type="GO" id="GO:0052693">
    <property type="term" value="F:epoxyqueuosine reductase activity"/>
    <property type="evidence" value="ECO:0007669"/>
    <property type="project" value="UniProtKB-UniRule"/>
</dbReference>
<dbReference type="GO" id="GO:0046872">
    <property type="term" value="F:metal ion binding"/>
    <property type="evidence" value="ECO:0007669"/>
    <property type="project" value="UniProtKB-KW"/>
</dbReference>
<dbReference type="GO" id="GO:0008616">
    <property type="term" value="P:queuosine biosynthetic process"/>
    <property type="evidence" value="ECO:0007669"/>
    <property type="project" value="UniProtKB-UniRule"/>
</dbReference>
<dbReference type="GO" id="GO:0006400">
    <property type="term" value="P:tRNA modification"/>
    <property type="evidence" value="ECO:0007669"/>
    <property type="project" value="UniProtKB-UniRule"/>
</dbReference>
<dbReference type="Gene3D" id="3.30.70.20">
    <property type="match status" value="1"/>
</dbReference>
<dbReference type="HAMAP" id="MF_00916">
    <property type="entry name" value="QueG"/>
    <property type="match status" value="1"/>
</dbReference>
<dbReference type="InterPro" id="IPR017896">
    <property type="entry name" value="4Fe4S_Fe-S-bd"/>
</dbReference>
<dbReference type="InterPro" id="IPR017900">
    <property type="entry name" value="4Fe4S_Fe_S_CS"/>
</dbReference>
<dbReference type="InterPro" id="IPR004453">
    <property type="entry name" value="QueG"/>
</dbReference>
<dbReference type="InterPro" id="IPR013542">
    <property type="entry name" value="QueG_DUF1730"/>
</dbReference>
<dbReference type="NCBIfam" id="TIGR00276">
    <property type="entry name" value="tRNA epoxyqueuosine(34) reductase QueG"/>
    <property type="match status" value="1"/>
</dbReference>
<dbReference type="PANTHER" id="PTHR30002">
    <property type="entry name" value="EPOXYQUEUOSINE REDUCTASE"/>
    <property type="match status" value="1"/>
</dbReference>
<dbReference type="PANTHER" id="PTHR30002:SF4">
    <property type="entry name" value="EPOXYQUEUOSINE REDUCTASE"/>
    <property type="match status" value="1"/>
</dbReference>
<dbReference type="Pfam" id="PF13484">
    <property type="entry name" value="Fer4_16"/>
    <property type="match status" value="1"/>
</dbReference>
<dbReference type="Pfam" id="PF08331">
    <property type="entry name" value="QueG_DUF1730"/>
    <property type="match status" value="1"/>
</dbReference>
<dbReference type="SUPFAM" id="SSF46548">
    <property type="entry name" value="alpha-helical ferredoxin"/>
    <property type="match status" value="1"/>
</dbReference>
<dbReference type="PROSITE" id="PS00198">
    <property type="entry name" value="4FE4S_FER_1"/>
    <property type="match status" value="1"/>
</dbReference>
<dbReference type="PROSITE" id="PS51379">
    <property type="entry name" value="4FE4S_FER_2"/>
    <property type="match status" value="2"/>
</dbReference>
<comment type="function">
    <text evidence="1">Catalyzes the conversion of epoxyqueuosine (oQ) to queuosine (Q), which is a hypermodified base found in the wobble positions of tRNA(Asp), tRNA(Asn), tRNA(His) and tRNA(Tyr).</text>
</comment>
<comment type="catalytic activity">
    <reaction evidence="1">
        <text>epoxyqueuosine(34) in tRNA + AH2 = queuosine(34) in tRNA + A + H2O</text>
        <dbReference type="Rhea" id="RHEA:32159"/>
        <dbReference type="Rhea" id="RHEA-COMP:18571"/>
        <dbReference type="Rhea" id="RHEA-COMP:18582"/>
        <dbReference type="ChEBI" id="CHEBI:13193"/>
        <dbReference type="ChEBI" id="CHEBI:15377"/>
        <dbReference type="ChEBI" id="CHEBI:17499"/>
        <dbReference type="ChEBI" id="CHEBI:194431"/>
        <dbReference type="ChEBI" id="CHEBI:194443"/>
        <dbReference type="EC" id="1.17.99.6"/>
    </reaction>
</comment>
<comment type="cofactor">
    <cofactor evidence="1">
        <name>cob(II)alamin</name>
        <dbReference type="ChEBI" id="CHEBI:16304"/>
    </cofactor>
</comment>
<comment type="cofactor">
    <cofactor evidence="1">
        <name>[4Fe-4S] cluster</name>
        <dbReference type="ChEBI" id="CHEBI:49883"/>
    </cofactor>
    <text evidence="1">Binds 2 [4Fe-4S] clusters per monomer.</text>
</comment>
<comment type="pathway">
    <text evidence="1">tRNA modification; tRNA-queuosine biosynthesis.</text>
</comment>
<comment type="subunit">
    <text evidence="1">Monomer.</text>
</comment>
<comment type="subcellular location">
    <subcellularLocation>
        <location evidence="1">Cytoplasm</location>
    </subcellularLocation>
</comment>
<comment type="similarity">
    <text evidence="1">Belongs to the QueG family.</text>
</comment>
<reference key="1">
    <citation type="journal article" date="2011" name="Stand. Genomic Sci.">
        <title>Complete genome sequence of Leadbetterella byssophila type strain (4M15).</title>
        <authorList>
            <person name="Abt B."/>
            <person name="Teshima H."/>
            <person name="Lucas S."/>
            <person name="Lapidus A."/>
            <person name="Del Rio T.G."/>
            <person name="Nolan M."/>
            <person name="Tice H."/>
            <person name="Cheng J.F."/>
            <person name="Pitluck S."/>
            <person name="Liolios K."/>
            <person name="Pagani I."/>
            <person name="Ivanova N."/>
            <person name="Mavromatis K."/>
            <person name="Pati A."/>
            <person name="Tapia R."/>
            <person name="Han C."/>
            <person name="Goodwin L."/>
            <person name="Chen A."/>
            <person name="Palaniappan K."/>
            <person name="Land M."/>
            <person name="Hauser L."/>
            <person name="Chang Y.J."/>
            <person name="Jeffries C.D."/>
            <person name="Rohde M."/>
            <person name="Goker M."/>
            <person name="Tindall B.J."/>
            <person name="Detter J.C."/>
            <person name="Woyke T."/>
            <person name="Bristow J."/>
            <person name="Eisen J.A."/>
            <person name="Markowitz V."/>
            <person name="Hugenholtz P."/>
            <person name="Klenk H.P."/>
            <person name="Kyrpides N.C."/>
        </authorList>
    </citation>
    <scope>NUCLEOTIDE SEQUENCE [LARGE SCALE GENOMIC DNA]</scope>
    <source>
        <strain>DSM 17132 / JCM 16389 / KACC 11308 / NBRC 106382 / 4M15</strain>
    </source>
</reference>
<accession>E4RUV9</accession>
<organism>
    <name type="scientific">Leadbetterella byssophila (strain DSM 17132 / JCM 16389 / KACC 11308 / NBRC 106382 / 4M15)</name>
    <dbReference type="NCBI Taxonomy" id="649349"/>
    <lineage>
        <taxon>Bacteria</taxon>
        <taxon>Pseudomonadati</taxon>
        <taxon>Bacteroidota</taxon>
        <taxon>Cytophagia</taxon>
        <taxon>Cytophagales</taxon>
        <taxon>Leadbetterellaceae</taxon>
        <taxon>Leadbetterella</taxon>
    </lineage>
</organism>
<gene>
    <name evidence="1" type="primary">queG</name>
    <name type="ordered locus">Lbys_1262</name>
</gene>
<name>QUEG_LEAB4</name>
<feature type="chain" id="PRO_0000416074" description="Epoxyqueuosine reductase">
    <location>
        <begin position="1"/>
        <end position="302"/>
    </location>
</feature>
<feature type="domain" description="4Fe-4S ferredoxin-type 1" evidence="1">
    <location>
        <begin position="170"/>
        <end position="202"/>
    </location>
</feature>
<feature type="domain" description="4Fe-4S ferredoxin-type 2" evidence="1">
    <location>
        <begin position="221"/>
        <end position="251"/>
    </location>
</feature>
<feature type="active site" description="Proton donor" evidence="1">
    <location>
        <position position="128"/>
    </location>
</feature>
<feature type="binding site" evidence="1">
    <location>
        <position position="182"/>
    </location>
    <ligand>
        <name>[4Fe-4S] cluster</name>
        <dbReference type="ChEBI" id="CHEBI:49883"/>
        <label>1</label>
    </ligand>
</feature>
<feature type="binding site" evidence="1">
    <location>
        <position position="185"/>
    </location>
    <ligand>
        <name>[4Fe-4S] cluster</name>
        <dbReference type="ChEBI" id="CHEBI:49883"/>
        <label>1</label>
    </ligand>
</feature>
<feature type="binding site" evidence="1">
    <location>
        <position position="188"/>
    </location>
    <ligand>
        <name>[4Fe-4S] cluster</name>
        <dbReference type="ChEBI" id="CHEBI:49883"/>
        <label>1</label>
    </ligand>
</feature>
<feature type="binding site" evidence="1">
    <location>
        <position position="192"/>
    </location>
    <ligand>
        <name>[4Fe-4S] cluster</name>
        <dbReference type="ChEBI" id="CHEBI:49883"/>
        <label>2</label>
    </ligand>
</feature>
<feature type="binding site" evidence="1">
    <location>
        <position position="207"/>
    </location>
    <ligand>
        <name>[4Fe-4S] cluster</name>
        <dbReference type="ChEBI" id="CHEBI:49883"/>
        <label>2</label>
    </ligand>
</feature>
<feature type="binding site" evidence="1">
    <location>
        <position position="234"/>
    </location>
    <ligand>
        <name>[4Fe-4S] cluster</name>
        <dbReference type="ChEBI" id="CHEBI:49883"/>
        <label>2</label>
    </ligand>
</feature>
<feature type="binding site" evidence="1">
    <location>
        <position position="237"/>
    </location>
    <ligand>
        <name>[4Fe-4S] cluster</name>
        <dbReference type="ChEBI" id="CHEBI:49883"/>
        <label>2</label>
    </ligand>
</feature>
<feature type="binding site" evidence="1">
    <location>
        <position position="241"/>
    </location>
    <ligand>
        <name>[4Fe-4S] cluster</name>
        <dbReference type="ChEBI" id="CHEBI:49883"/>
        <label>1</label>
    </ligand>
</feature>
<proteinExistence type="inferred from homology"/>
<keyword id="KW-0004">4Fe-4S</keyword>
<keyword id="KW-0963">Cytoplasm</keyword>
<keyword id="KW-0408">Iron</keyword>
<keyword id="KW-0411">Iron-sulfur</keyword>
<keyword id="KW-0479">Metal-binding</keyword>
<keyword id="KW-0560">Oxidoreductase</keyword>
<keyword id="KW-0671">Queuosine biosynthesis</keyword>
<keyword id="KW-1185">Reference proteome</keyword>
<keyword id="KW-0677">Repeat</keyword>
<keyword id="KW-0819">tRNA processing</keyword>
<protein>
    <recommendedName>
        <fullName evidence="1">Epoxyqueuosine reductase</fullName>
        <ecNumber evidence="1">1.17.99.6</ecNumber>
    </recommendedName>
    <alternativeName>
        <fullName evidence="1">Queuosine biosynthesis protein QueG</fullName>
    </alternativeName>
</protein>